<accession>P28814</accession>
<feature type="chain" id="PRO_0000164261" description="Barwin">
    <location>
        <begin position="1"/>
        <end position="125"/>
    </location>
</feature>
<feature type="domain" description="Barwin" evidence="1">
    <location>
        <begin position="1"/>
        <end position="125"/>
    </location>
</feature>
<feature type="modified residue" description="Pyrrolidone carboxylic acid" evidence="2">
    <location>
        <position position="1"/>
    </location>
</feature>
<feature type="disulfide bond" evidence="2">
    <location>
        <begin position="31"/>
        <end position="63"/>
    </location>
</feature>
<feature type="disulfide bond" evidence="2">
    <location>
        <begin position="52"/>
        <end position="86"/>
    </location>
</feature>
<feature type="disulfide bond" evidence="2">
    <location>
        <begin position="66"/>
        <end position="123"/>
    </location>
</feature>
<feature type="strand" evidence="3">
    <location>
        <begin position="2"/>
        <end position="9"/>
    </location>
</feature>
<feature type="helix" evidence="3">
    <location>
        <begin position="16"/>
        <end position="18"/>
    </location>
</feature>
<feature type="turn" evidence="3">
    <location>
        <begin position="25"/>
        <end position="27"/>
    </location>
</feature>
<feature type="helix" evidence="3">
    <location>
        <begin position="32"/>
        <end position="35"/>
    </location>
</feature>
<feature type="helix" evidence="3">
    <location>
        <begin position="40"/>
        <end position="45"/>
    </location>
</feature>
<feature type="strand" evidence="3">
    <location>
        <begin position="49"/>
        <end position="51"/>
    </location>
</feature>
<feature type="strand" evidence="4">
    <location>
        <begin position="53"/>
        <end position="55"/>
    </location>
</feature>
<feature type="helix" evidence="3">
    <location>
        <begin position="60"/>
        <end position="62"/>
    </location>
</feature>
<feature type="strand" evidence="3">
    <location>
        <begin position="66"/>
        <end position="70"/>
    </location>
</feature>
<feature type="turn" evidence="3">
    <location>
        <begin position="72"/>
        <end position="74"/>
    </location>
</feature>
<feature type="strand" evidence="3">
    <location>
        <begin position="77"/>
        <end position="84"/>
    </location>
</feature>
<feature type="strand" evidence="3">
    <location>
        <begin position="87"/>
        <end position="90"/>
    </location>
</feature>
<feature type="strand" evidence="4">
    <location>
        <begin position="91"/>
        <end position="93"/>
    </location>
</feature>
<feature type="strand" evidence="3">
    <location>
        <begin position="95"/>
        <end position="98"/>
    </location>
</feature>
<feature type="helix" evidence="3">
    <location>
        <begin position="99"/>
        <end position="102"/>
    </location>
</feature>
<feature type="helix" evidence="3">
    <location>
        <begin position="107"/>
        <end position="111"/>
    </location>
</feature>
<feature type="strand" evidence="3">
    <location>
        <begin position="112"/>
        <end position="121"/>
    </location>
</feature>
<comment type="function">
    <text>May be involved in a defense mechanism. Probable plant lectin. Binds weakly a chitin analog.</text>
</comment>
<sequence length="125" mass="13737">QQANDVRATYHYYRPAQNNWDLGAPAVSAYCATWDASKPLSWRSKYGWTAFCGPAGPRGQAACGKCLRVTNPATGAQITARIVDQCANGGLDLDWDTVFTKIDTNGIGYQQGHLNVNYQFVDCRD</sequence>
<dbReference type="PIR" id="A43474">
    <property type="entry name" value="A43474"/>
</dbReference>
<dbReference type="PDB" id="1BW3">
    <property type="method" value="NMR"/>
    <property type="chains" value="A=2-125"/>
</dbReference>
<dbReference type="PDB" id="1BW4">
    <property type="method" value="NMR"/>
    <property type="chains" value="A=2-125"/>
</dbReference>
<dbReference type="PDBsum" id="1BW3"/>
<dbReference type="PDBsum" id="1BW4"/>
<dbReference type="SMR" id="P28814"/>
<dbReference type="EvolutionaryTrace" id="P28814"/>
<dbReference type="ExpressionAtlas" id="P28814">
    <property type="expression patterns" value="baseline and differential"/>
</dbReference>
<dbReference type="GO" id="GO:0030246">
    <property type="term" value="F:carbohydrate binding"/>
    <property type="evidence" value="ECO:0007669"/>
    <property type="project" value="UniProtKB-KW"/>
</dbReference>
<dbReference type="GO" id="GO:0004540">
    <property type="term" value="F:RNA nuclease activity"/>
    <property type="evidence" value="ECO:0007669"/>
    <property type="project" value="InterPro"/>
</dbReference>
<dbReference type="GO" id="GO:0042742">
    <property type="term" value="P:defense response to bacterium"/>
    <property type="evidence" value="ECO:0007669"/>
    <property type="project" value="InterPro"/>
</dbReference>
<dbReference type="GO" id="GO:0050832">
    <property type="term" value="P:defense response to fungus"/>
    <property type="evidence" value="ECO:0007669"/>
    <property type="project" value="InterPro"/>
</dbReference>
<dbReference type="CDD" id="cd22777">
    <property type="entry name" value="DPBB_barwin-like"/>
    <property type="match status" value="1"/>
</dbReference>
<dbReference type="FunFam" id="2.40.40.10:FF:000007">
    <property type="entry name" value="Papaya barwin-like protein"/>
    <property type="match status" value="1"/>
</dbReference>
<dbReference type="Gene3D" id="2.40.40.10">
    <property type="entry name" value="RlpA-like domain"/>
    <property type="match status" value="1"/>
</dbReference>
<dbReference type="InterPro" id="IPR018226">
    <property type="entry name" value="Barwin_CS"/>
</dbReference>
<dbReference type="InterPro" id="IPR001153">
    <property type="entry name" value="Barwin_dom"/>
</dbReference>
<dbReference type="InterPro" id="IPR044301">
    <property type="entry name" value="PR4"/>
</dbReference>
<dbReference type="InterPro" id="IPR036908">
    <property type="entry name" value="RlpA-like_sf"/>
</dbReference>
<dbReference type="PANTHER" id="PTHR46351:SF18">
    <property type="entry name" value="WHEATWIN-2"/>
    <property type="match status" value="1"/>
</dbReference>
<dbReference type="PANTHER" id="PTHR46351">
    <property type="entry name" value="WOUND-INDUCED PROTEIN WIN2"/>
    <property type="match status" value="1"/>
</dbReference>
<dbReference type="Pfam" id="PF00967">
    <property type="entry name" value="Barwin"/>
    <property type="match status" value="1"/>
</dbReference>
<dbReference type="PRINTS" id="PR00602">
    <property type="entry name" value="BARWIN"/>
</dbReference>
<dbReference type="SUPFAM" id="SSF50685">
    <property type="entry name" value="Barwin-like endoglucanases"/>
    <property type="match status" value="1"/>
</dbReference>
<dbReference type="PROSITE" id="PS00771">
    <property type="entry name" value="BARWIN_1"/>
    <property type="match status" value="1"/>
</dbReference>
<dbReference type="PROSITE" id="PS00772">
    <property type="entry name" value="BARWIN_2"/>
    <property type="match status" value="1"/>
</dbReference>
<dbReference type="PROSITE" id="PS51174">
    <property type="entry name" value="BARWIN_3"/>
    <property type="match status" value="1"/>
</dbReference>
<evidence type="ECO:0000255" key="1">
    <source>
        <dbReference type="PROSITE-ProRule" id="PRU00527"/>
    </source>
</evidence>
<evidence type="ECO:0000269" key="2">
    <source>
    </source>
</evidence>
<evidence type="ECO:0007829" key="3">
    <source>
        <dbReference type="PDB" id="1BW3"/>
    </source>
</evidence>
<evidence type="ECO:0007829" key="4">
    <source>
        <dbReference type="PDB" id="1BW4"/>
    </source>
</evidence>
<reference key="1">
    <citation type="journal article" date="1992" name="Biochemistry">
        <title>Primary structure of barwin: a barley seed protein closely related to the C-terminal domain of proteins encoded by wound-induced plant genes.</title>
        <authorList>
            <person name="Svensson B."/>
            <person name="Svendsen I."/>
            <person name="Hoejrup P."/>
            <person name="Roepstorff P."/>
            <person name="Ludvigsen S."/>
            <person name="Poulsen F.M."/>
        </authorList>
    </citation>
    <scope>PROTEIN SEQUENCE</scope>
    <scope>PYROGLUTAMATE FORMATION AT GLN-1</scope>
    <scope>DISULFIDE BONDS</scope>
    <source>
        <strain>cv. Hiproly</strain>
        <tissue>Seed</tissue>
    </source>
</reference>
<reference key="2">
    <citation type="journal article" date="1992" name="Biochemistry">
        <title>Secondary structure in solution of barwin from barley seed using 1H nuclear magnetic resonance spectroscopy.</title>
        <authorList>
            <person name="Ludvigsen S."/>
            <person name="Poulsen F.M."/>
        </authorList>
    </citation>
    <scope>STRUCTURE BY NMR</scope>
    <source>
        <strain>cv. Hiproly</strain>
        <tissue>Seed</tissue>
    </source>
</reference>
<organism>
    <name type="scientific">Hordeum vulgare</name>
    <name type="common">Barley</name>
    <dbReference type="NCBI Taxonomy" id="4513"/>
    <lineage>
        <taxon>Eukaryota</taxon>
        <taxon>Viridiplantae</taxon>
        <taxon>Streptophyta</taxon>
        <taxon>Embryophyta</taxon>
        <taxon>Tracheophyta</taxon>
        <taxon>Spermatophyta</taxon>
        <taxon>Magnoliopsida</taxon>
        <taxon>Liliopsida</taxon>
        <taxon>Poales</taxon>
        <taxon>Poaceae</taxon>
        <taxon>BOP clade</taxon>
        <taxon>Pooideae</taxon>
        <taxon>Triticodae</taxon>
        <taxon>Triticeae</taxon>
        <taxon>Hordeinae</taxon>
        <taxon>Hordeum</taxon>
    </lineage>
</organism>
<proteinExistence type="evidence at protein level"/>
<keyword id="KW-0002">3D-structure</keyword>
<keyword id="KW-0903">Direct protein sequencing</keyword>
<keyword id="KW-1015">Disulfide bond</keyword>
<keyword id="KW-0430">Lectin</keyword>
<keyword id="KW-0611">Plant defense</keyword>
<keyword id="KW-0873">Pyrrolidone carboxylic acid</keyword>
<protein>
    <recommendedName>
        <fullName>Barwin</fullName>
    </recommendedName>
</protein>
<name>BARW_HORVU</name>